<comment type="function">
    <text evidence="1">Monomeric heme protein which primary function is to store oxygen and facilitate its diffusion within muscle tissues. Reversibly binds oxygen through a pentacoordinated heme iron and enables its timely and efficient release as needed during periods of heightened demand. Depending on the oxidative conditions of tissues and cells, and in addition to its ability to bind oxygen, it also has a nitrite reductase activity whereby it regulates the production of bioactive nitric oxide. Under stress conditions, like hypoxia and anoxia, it also protects cells against reactive oxygen species thanks to its pseudoperoxidase activity.</text>
</comment>
<comment type="catalytic activity">
    <reaction evidence="1">
        <text>Fe(III)-heme b-[protein] + nitric oxide + H2O = Fe(II)-heme b-[protein] + nitrite + 2 H(+)</text>
        <dbReference type="Rhea" id="RHEA:77711"/>
        <dbReference type="Rhea" id="RHEA-COMP:18975"/>
        <dbReference type="Rhea" id="RHEA-COMP:18976"/>
        <dbReference type="ChEBI" id="CHEBI:15377"/>
        <dbReference type="ChEBI" id="CHEBI:15378"/>
        <dbReference type="ChEBI" id="CHEBI:16301"/>
        <dbReference type="ChEBI" id="CHEBI:16480"/>
        <dbReference type="ChEBI" id="CHEBI:55376"/>
        <dbReference type="ChEBI" id="CHEBI:60344"/>
    </reaction>
    <physiologicalReaction direction="right-to-left" evidence="1">
        <dbReference type="Rhea" id="RHEA:77713"/>
    </physiologicalReaction>
</comment>
<comment type="catalytic activity">
    <reaction evidence="1">
        <text>H2O2 + AH2 = A + 2 H2O</text>
        <dbReference type="Rhea" id="RHEA:30275"/>
        <dbReference type="ChEBI" id="CHEBI:13193"/>
        <dbReference type="ChEBI" id="CHEBI:15377"/>
        <dbReference type="ChEBI" id="CHEBI:16240"/>
        <dbReference type="ChEBI" id="CHEBI:17499"/>
    </reaction>
</comment>
<comment type="subunit">
    <text evidence="2">Monomeric.</text>
</comment>
<comment type="subcellular location">
    <subcellularLocation>
        <location evidence="1">Cytoplasm</location>
        <location evidence="1">Sarcoplasm</location>
    </subcellularLocation>
</comment>
<comment type="similarity">
    <text evidence="7">Belongs to the globin family.</text>
</comment>
<evidence type="ECO:0000250" key="1">
    <source>
        <dbReference type="UniProtKB" id="P02144"/>
    </source>
</evidence>
<evidence type="ECO:0000250" key="2">
    <source>
        <dbReference type="UniProtKB" id="P02185"/>
    </source>
</evidence>
<evidence type="ECO:0000250" key="3">
    <source>
        <dbReference type="UniProtKB" id="P02189"/>
    </source>
</evidence>
<evidence type="ECO:0000250" key="4">
    <source>
        <dbReference type="UniProtKB" id="P04247"/>
    </source>
</evidence>
<evidence type="ECO:0000250" key="5">
    <source>
        <dbReference type="UniProtKB" id="P68082"/>
    </source>
</evidence>
<evidence type="ECO:0000250" key="6">
    <source>
        <dbReference type="UniProtKB" id="Q9QZ76"/>
    </source>
</evidence>
<evidence type="ECO:0000255" key="7">
    <source>
        <dbReference type="PROSITE-ProRule" id="PRU00238"/>
    </source>
</evidence>
<evidence type="ECO:0000269" key="8">
    <source>
    </source>
</evidence>
<evidence type="ECO:0000269" key="9">
    <source>
    </source>
</evidence>
<evidence type="ECO:0000305" key="10"/>
<keyword id="KW-0963">Cytoplasm</keyword>
<keyword id="KW-0903">Direct protein sequencing</keyword>
<keyword id="KW-0349">Heme</keyword>
<keyword id="KW-0408">Iron</keyword>
<keyword id="KW-0479">Metal-binding</keyword>
<keyword id="KW-0514">Muscle protein</keyword>
<keyword id="KW-0560">Oxidoreductase</keyword>
<keyword id="KW-0561">Oxygen transport</keyword>
<keyword id="KW-0597">Phosphoprotein</keyword>
<keyword id="KW-0813">Transport</keyword>
<organism>
    <name type="scientific">Delphinus delphis</name>
    <name type="common">Short-beaked common dolphin</name>
    <dbReference type="NCBI Taxonomy" id="9728"/>
    <lineage>
        <taxon>Eukaryota</taxon>
        <taxon>Metazoa</taxon>
        <taxon>Chordata</taxon>
        <taxon>Craniata</taxon>
        <taxon>Vertebrata</taxon>
        <taxon>Euteleostomi</taxon>
        <taxon>Mammalia</taxon>
        <taxon>Eutheria</taxon>
        <taxon>Laurasiatheria</taxon>
        <taxon>Artiodactyla</taxon>
        <taxon>Whippomorpha</taxon>
        <taxon>Cetacea</taxon>
        <taxon>Odontoceti</taxon>
        <taxon>Delphinidae</taxon>
        <taxon>Delphinus</taxon>
    </lineage>
</organism>
<gene>
    <name type="primary">MB</name>
</gene>
<reference key="1">
    <citation type="journal article" date="1977" name="Biochemistry">
        <title>Complete primary structure of the major component myoglobin of Pacific common dolphin (Delphinus delphis).</title>
        <authorList>
            <person name="Wang C.-C."/>
            <person name="Avila R."/>
            <person name="Jones B.N."/>
            <person name="Gurd F.R.N."/>
        </authorList>
    </citation>
    <scope>PROTEIN SEQUENCE OF 2-154</scope>
    <source>
        <tissue>Skeletal muscle</tissue>
    </source>
</reference>
<reference key="2">
    <citation type="journal article" date="1971" name="FEBS Lett.">
        <title>Primary structure of N-terminal part of molecule of dolphin myoglobin.</title>
        <authorList>
            <person name="Kluh I."/>
            <person name="Bakardjieva A."/>
        </authorList>
    </citation>
    <scope>PROTEIN SEQUENCE OF 2-32</scope>
</reference>
<reference key="3">
    <citation type="journal article" date="1970" name="Biochim. Biophys. Acta">
        <title>Differences in amino acid sequence between dolphin and sperm whale myoglobins.</title>
        <authorList>
            <person name="Karadjova M."/>
            <person name="Nedkov P."/>
            <person name="Bakardjieva A."/>
            <person name="Genov N."/>
        </authorList>
    </citation>
    <scope>PROTEIN SEQUENCE OF 32-154</scope>
</reference>
<reference key="4">
    <citation type="submission" date="1977-12" db="PIR data bank">
        <authorList>
            <person name="Kluh I."/>
        </authorList>
    </citation>
    <scope>SEQUENCE REVISION TO 27</scope>
</reference>
<protein>
    <recommendedName>
        <fullName>Myoglobin</fullName>
    </recommendedName>
    <alternativeName>
        <fullName evidence="1">Nitrite reductase MB</fullName>
        <ecNumber evidence="1">1.7.-.-</ecNumber>
    </alternativeName>
    <alternativeName>
        <fullName evidence="1">Pseudoperoxidase MB</fullName>
        <ecNumber evidence="1">1.11.1.-</ecNumber>
    </alternativeName>
</protein>
<name>MYG_DELDE</name>
<sequence length="154" mass="17188">MGLSDGEWQLVLNVWGKVEADLAGHGQDVLIRLFKGHPETLEKFDKFKHLKTEADMKASEDLKKHGNTVLTALGAILKKKGHHDAELKPLAQSHATKHKIPIKYLEFISEAIIHVLHSRHPAEFGADAQGAMNKALELFRKDIAAKYKELGFHG</sequence>
<dbReference type="EC" id="1.7.-.-" evidence="1"/>
<dbReference type="EC" id="1.11.1.-" evidence="1"/>
<dbReference type="PIR" id="A26230">
    <property type="entry name" value="MYDDBS"/>
</dbReference>
<dbReference type="RefSeq" id="XP_059879900.1">
    <property type="nucleotide sequence ID" value="XM_060023917.1"/>
</dbReference>
<dbReference type="SMR" id="P68276"/>
<dbReference type="GeneID" id="132433314"/>
<dbReference type="GO" id="GO:0070062">
    <property type="term" value="C:extracellular exosome"/>
    <property type="evidence" value="ECO:0007669"/>
    <property type="project" value="TreeGrafter"/>
</dbReference>
<dbReference type="GO" id="GO:0016528">
    <property type="term" value="C:sarcoplasm"/>
    <property type="evidence" value="ECO:0000250"/>
    <property type="project" value="UniProtKB"/>
</dbReference>
<dbReference type="GO" id="GO:0020037">
    <property type="term" value="F:heme binding"/>
    <property type="evidence" value="ECO:0007669"/>
    <property type="project" value="InterPro"/>
</dbReference>
<dbReference type="GO" id="GO:0046872">
    <property type="term" value="F:metal ion binding"/>
    <property type="evidence" value="ECO:0007669"/>
    <property type="project" value="UniProtKB-KW"/>
</dbReference>
<dbReference type="GO" id="GO:0098809">
    <property type="term" value="F:nitrite reductase activity"/>
    <property type="evidence" value="ECO:0000250"/>
    <property type="project" value="UniProtKB"/>
</dbReference>
<dbReference type="GO" id="GO:0019825">
    <property type="term" value="F:oxygen binding"/>
    <property type="evidence" value="ECO:0007669"/>
    <property type="project" value="InterPro"/>
</dbReference>
<dbReference type="GO" id="GO:0005344">
    <property type="term" value="F:oxygen carrier activity"/>
    <property type="evidence" value="ECO:0000250"/>
    <property type="project" value="UniProtKB"/>
</dbReference>
<dbReference type="GO" id="GO:0004601">
    <property type="term" value="F:peroxidase activity"/>
    <property type="evidence" value="ECO:0000250"/>
    <property type="project" value="UniProtKB"/>
</dbReference>
<dbReference type="GO" id="GO:0019430">
    <property type="term" value="P:removal of superoxide radicals"/>
    <property type="evidence" value="ECO:0000250"/>
    <property type="project" value="UniProtKB"/>
</dbReference>
<dbReference type="CDD" id="cd08926">
    <property type="entry name" value="Mb"/>
    <property type="match status" value="1"/>
</dbReference>
<dbReference type="Gene3D" id="6.10.140.2100">
    <property type="match status" value="1"/>
</dbReference>
<dbReference type="Gene3D" id="6.10.140.2110">
    <property type="match status" value="1"/>
</dbReference>
<dbReference type="InterPro" id="IPR000971">
    <property type="entry name" value="Globin"/>
</dbReference>
<dbReference type="InterPro" id="IPR009050">
    <property type="entry name" value="Globin-like_sf"/>
</dbReference>
<dbReference type="InterPro" id="IPR002335">
    <property type="entry name" value="Myoglobin"/>
</dbReference>
<dbReference type="PANTHER" id="PTHR47132">
    <property type="entry name" value="MYOGLOBIN"/>
    <property type="match status" value="1"/>
</dbReference>
<dbReference type="PANTHER" id="PTHR47132:SF1">
    <property type="entry name" value="MYOGLOBIN"/>
    <property type="match status" value="1"/>
</dbReference>
<dbReference type="Pfam" id="PF00042">
    <property type="entry name" value="Globin"/>
    <property type="match status" value="1"/>
</dbReference>
<dbReference type="PRINTS" id="PR00613">
    <property type="entry name" value="MYOGLOBIN"/>
</dbReference>
<dbReference type="SUPFAM" id="SSF46458">
    <property type="entry name" value="Globin-like"/>
    <property type="match status" value="1"/>
</dbReference>
<dbReference type="PROSITE" id="PS01033">
    <property type="entry name" value="GLOBIN"/>
    <property type="match status" value="1"/>
</dbReference>
<proteinExistence type="evidence at protein level"/>
<accession>P68276</accession>
<accession>P02172</accession>
<accession>P02175</accession>
<feature type="initiator methionine" description="Removed" evidence="8 9">
    <location>
        <position position="1"/>
    </location>
</feature>
<feature type="chain" id="PRO_0000053287" description="Myoglobin">
    <location>
        <begin position="2"/>
        <end position="154"/>
    </location>
</feature>
<feature type="domain" description="Globin" evidence="7">
    <location>
        <begin position="2"/>
        <end position="148"/>
    </location>
</feature>
<feature type="binding site" evidence="5">
    <location>
        <position position="65"/>
    </location>
    <ligand>
        <name>nitrite</name>
        <dbReference type="ChEBI" id="CHEBI:16301"/>
    </ligand>
</feature>
<feature type="binding site" evidence="3 7">
    <location>
        <position position="65"/>
    </location>
    <ligand>
        <name>O2</name>
        <dbReference type="ChEBI" id="CHEBI:15379"/>
    </ligand>
</feature>
<feature type="binding site" description="proximal binding residue" evidence="1">
    <location>
        <position position="94"/>
    </location>
    <ligand>
        <name>heme b</name>
        <dbReference type="ChEBI" id="CHEBI:60344"/>
    </ligand>
    <ligandPart>
        <name>Fe</name>
        <dbReference type="ChEBI" id="CHEBI:18248"/>
    </ligandPart>
</feature>
<feature type="modified residue" description="Phosphoserine" evidence="6">
    <location>
        <position position="4"/>
    </location>
</feature>
<feature type="modified residue" description="Phosphothreonine" evidence="4">
    <location>
        <position position="68"/>
    </location>
</feature>
<feature type="sequence conflict" description="In Ref. 2; AA sequence." evidence="10" ref="2">
    <original>L</original>
    <variation>V</variation>
    <location>
        <position position="22"/>
    </location>
</feature>
<feature type="sequence conflict" description="In Ref. 2; AA sequence." evidence="10" ref="2">
    <original>V</original>
    <variation>I</variation>
    <location>
        <position position="29"/>
    </location>
</feature>
<feature type="sequence conflict" description="In Ref. 3; AA sequence." evidence="10" ref="3">
    <original>N</original>
    <variation>D</variation>
    <location>
        <position position="67"/>
    </location>
</feature>
<feature type="sequence conflict" description="In Ref. 3; AA sequence." evidence="10" ref="3">
    <original>E</original>
    <variation>Q</variation>
    <location>
        <position position="123"/>
    </location>
</feature>